<reference key="1">
    <citation type="submission" date="2008-12" db="EMBL/GenBank/DDBJ databases">
        <title>Complete sequence of Chloroflexus aggregans DSM 9485.</title>
        <authorList>
            <consortium name="US DOE Joint Genome Institute"/>
            <person name="Lucas S."/>
            <person name="Copeland A."/>
            <person name="Lapidus A."/>
            <person name="Glavina del Rio T."/>
            <person name="Dalin E."/>
            <person name="Tice H."/>
            <person name="Pitluck S."/>
            <person name="Foster B."/>
            <person name="Larimer F."/>
            <person name="Land M."/>
            <person name="Hauser L."/>
            <person name="Kyrpides N."/>
            <person name="Mikhailova N."/>
            <person name="Bryant D.A."/>
            <person name="Richardson P."/>
        </authorList>
    </citation>
    <scope>NUCLEOTIDE SEQUENCE [LARGE SCALE GENOMIC DNA]</scope>
    <source>
        <strain>MD-66 / DSM 9485</strain>
    </source>
</reference>
<accession>B8G6Q8</accession>
<comment type="function">
    <text evidence="1">With S4 and S12 plays an important role in translational accuracy.</text>
</comment>
<comment type="function">
    <text evidence="1">Located at the back of the 30S subunit body where it stabilizes the conformation of the head with respect to the body.</text>
</comment>
<comment type="subunit">
    <text evidence="1">Part of the 30S ribosomal subunit. Contacts proteins S4 and S8.</text>
</comment>
<comment type="domain">
    <text>The N-terminal domain interacts with the head of the 30S subunit; the C-terminal domain interacts with the body and contacts protein S4. The interaction surface between S4 and S5 is involved in control of translational fidelity.</text>
</comment>
<comment type="similarity">
    <text evidence="1">Belongs to the universal ribosomal protein uS5 family.</text>
</comment>
<protein>
    <recommendedName>
        <fullName evidence="1">Small ribosomal subunit protein uS5</fullName>
    </recommendedName>
    <alternativeName>
        <fullName evidence="3">30S ribosomal protein S5</fullName>
    </alternativeName>
</protein>
<keyword id="KW-0687">Ribonucleoprotein</keyword>
<keyword id="KW-0689">Ribosomal protein</keyword>
<keyword id="KW-0694">RNA-binding</keyword>
<keyword id="KW-0699">rRNA-binding</keyword>
<evidence type="ECO:0000255" key="1">
    <source>
        <dbReference type="HAMAP-Rule" id="MF_01307"/>
    </source>
</evidence>
<evidence type="ECO:0000256" key="2">
    <source>
        <dbReference type="SAM" id="MobiDB-lite"/>
    </source>
</evidence>
<evidence type="ECO:0000305" key="3"/>
<dbReference type="EMBL" id="CP001337">
    <property type="protein sequence ID" value="ACL25867.1"/>
    <property type="molecule type" value="Genomic_DNA"/>
</dbReference>
<dbReference type="RefSeq" id="WP_015941721.1">
    <property type="nucleotide sequence ID" value="NC_011831.1"/>
</dbReference>
<dbReference type="SMR" id="B8G6Q8"/>
<dbReference type="STRING" id="326427.Cagg_3007"/>
<dbReference type="KEGG" id="cag:Cagg_3007"/>
<dbReference type="eggNOG" id="COG0098">
    <property type="taxonomic scope" value="Bacteria"/>
</dbReference>
<dbReference type="HOGENOM" id="CLU_065898_2_2_0"/>
<dbReference type="OrthoDB" id="9809045at2"/>
<dbReference type="Proteomes" id="UP000002508">
    <property type="component" value="Chromosome"/>
</dbReference>
<dbReference type="GO" id="GO:0015935">
    <property type="term" value="C:small ribosomal subunit"/>
    <property type="evidence" value="ECO:0007669"/>
    <property type="project" value="InterPro"/>
</dbReference>
<dbReference type="GO" id="GO:0019843">
    <property type="term" value="F:rRNA binding"/>
    <property type="evidence" value="ECO:0007669"/>
    <property type="project" value="UniProtKB-UniRule"/>
</dbReference>
<dbReference type="GO" id="GO:0003735">
    <property type="term" value="F:structural constituent of ribosome"/>
    <property type="evidence" value="ECO:0007669"/>
    <property type="project" value="InterPro"/>
</dbReference>
<dbReference type="GO" id="GO:0006412">
    <property type="term" value="P:translation"/>
    <property type="evidence" value="ECO:0007669"/>
    <property type="project" value="UniProtKB-UniRule"/>
</dbReference>
<dbReference type="FunFam" id="3.30.160.20:FF:000001">
    <property type="entry name" value="30S ribosomal protein S5"/>
    <property type="match status" value="1"/>
</dbReference>
<dbReference type="FunFam" id="3.30.230.10:FF:000002">
    <property type="entry name" value="30S ribosomal protein S5"/>
    <property type="match status" value="1"/>
</dbReference>
<dbReference type="Gene3D" id="3.30.160.20">
    <property type="match status" value="1"/>
</dbReference>
<dbReference type="Gene3D" id="3.30.230.10">
    <property type="match status" value="1"/>
</dbReference>
<dbReference type="HAMAP" id="MF_01307_B">
    <property type="entry name" value="Ribosomal_uS5_B"/>
    <property type="match status" value="1"/>
</dbReference>
<dbReference type="InterPro" id="IPR020568">
    <property type="entry name" value="Ribosomal_Su5_D2-typ_SF"/>
</dbReference>
<dbReference type="InterPro" id="IPR000851">
    <property type="entry name" value="Ribosomal_uS5"/>
</dbReference>
<dbReference type="InterPro" id="IPR005712">
    <property type="entry name" value="Ribosomal_uS5_bac-type"/>
</dbReference>
<dbReference type="InterPro" id="IPR005324">
    <property type="entry name" value="Ribosomal_uS5_C"/>
</dbReference>
<dbReference type="InterPro" id="IPR013810">
    <property type="entry name" value="Ribosomal_uS5_N"/>
</dbReference>
<dbReference type="InterPro" id="IPR018192">
    <property type="entry name" value="Ribosomal_uS5_N_CS"/>
</dbReference>
<dbReference type="InterPro" id="IPR014721">
    <property type="entry name" value="Ribsml_uS5_D2-typ_fold_subgr"/>
</dbReference>
<dbReference type="NCBIfam" id="TIGR01021">
    <property type="entry name" value="rpsE_bact"/>
    <property type="match status" value="1"/>
</dbReference>
<dbReference type="PANTHER" id="PTHR48277">
    <property type="entry name" value="MITOCHONDRIAL RIBOSOMAL PROTEIN S5"/>
    <property type="match status" value="1"/>
</dbReference>
<dbReference type="PANTHER" id="PTHR48277:SF1">
    <property type="entry name" value="MITOCHONDRIAL RIBOSOMAL PROTEIN S5"/>
    <property type="match status" value="1"/>
</dbReference>
<dbReference type="Pfam" id="PF00333">
    <property type="entry name" value="Ribosomal_S5"/>
    <property type="match status" value="1"/>
</dbReference>
<dbReference type="Pfam" id="PF03719">
    <property type="entry name" value="Ribosomal_S5_C"/>
    <property type="match status" value="1"/>
</dbReference>
<dbReference type="SUPFAM" id="SSF54768">
    <property type="entry name" value="dsRNA-binding domain-like"/>
    <property type="match status" value="1"/>
</dbReference>
<dbReference type="SUPFAM" id="SSF54211">
    <property type="entry name" value="Ribosomal protein S5 domain 2-like"/>
    <property type="match status" value="1"/>
</dbReference>
<dbReference type="PROSITE" id="PS00585">
    <property type="entry name" value="RIBOSOMAL_S5"/>
    <property type="match status" value="1"/>
</dbReference>
<dbReference type="PROSITE" id="PS50881">
    <property type="entry name" value="S5_DSRBD"/>
    <property type="match status" value="1"/>
</dbReference>
<sequence length="179" mass="19461">MKRERINPDTLELDERVVLINRVSKVVKGGRRFSFSTVVVVGDGKGHVGIGMGKAAEVPDAIRKGAEAAKRNLIRVPLVHSTIPHEIVTKFAATKVMLRPAAPGTGVIAGRGVRPVVEAAGIKDLLSKVYGSNNPVNVVKATFKALSEMTSLQEMARRRDMTPQELNARRMRRETTEAA</sequence>
<gene>
    <name evidence="1" type="primary">rpsE</name>
    <name type="ordered locus">Cagg_3007</name>
</gene>
<feature type="chain" id="PRO_1000165446" description="Small ribosomal subunit protein uS5">
    <location>
        <begin position="1"/>
        <end position="179"/>
    </location>
</feature>
<feature type="domain" description="S5 DRBM" evidence="1">
    <location>
        <begin position="13"/>
        <end position="76"/>
    </location>
</feature>
<feature type="region of interest" description="Disordered" evidence="2">
    <location>
        <begin position="160"/>
        <end position="179"/>
    </location>
</feature>
<organism>
    <name type="scientific">Chloroflexus aggregans (strain MD-66 / DSM 9485)</name>
    <dbReference type="NCBI Taxonomy" id="326427"/>
    <lineage>
        <taxon>Bacteria</taxon>
        <taxon>Bacillati</taxon>
        <taxon>Chloroflexota</taxon>
        <taxon>Chloroflexia</taxon>
        <taxon>Chloroflexales</taxon>
        <taxon>Chloroflexineae</taxon>
        <taxon>Chloroflexaceae</taxon>
        <taxon>Chloroflexus</taxon>
    </lineage>
</organism>
<name>RS5_CHLAD</name>
<proteinExistence type="inferred from homology"/>